<proteinExistence type="inferred from homology"/>
<keyword id="KW-1185">Reference proteome</keyword>
<feature type="chain" id="PRO_0000140485" description="UPF0280 protein MA_1715">
    <location>
        <begin position="1"/>
        <end position="253"/>
    </location>
</feature>
<organism>
    <name type="scientific">Methanosarcina acetivorans (strain ATCC 35395 / DSM 2834 / JCM 12185 / C2A)</name>
    <dbReference type="NCBI Taxonomy" id="188937"/>
    <lineage>
        <taxon>Archaea</taxon>
        <taxon>Methanobacteriati</taxon>
        <taxon>Methanobacteriota</taxon>
        <taxon>Stenosarchaea group</taxon>
        <taxon>Methanomicrobia</taxon>
        <taxon>Methanosarcinales</taxon>
        <taxon>Methanosarcinaceae</taxon>
        <taxon>Methanosarcina</taxon>
    </lineage>
</organism>
<protein>
    <recommendedName>
        <fullName evidence="1">UPF0280 protein MA_1715</fullName>
    </recommendedName>
</protein>
<name>Y1715_METAC</name>
<reference key="1">
    <citation type="journal article" date="2002" name="Genome Res.">
        <title>The genome of Methanosarcina acetivorans reveals extensive metabolic and physiological diversity.</title>
        <authorList>
            <person name="Galagan J.E."/>
            <person name="Nusbaum C."/>
            <person name="Roy A."/>
            <person name="Endrizzi M.G."/>
            <person name="Macdonald P."/>
            <person name="FitzHugh W."/>
            <person name="Calvo S."/>
            <person name="Engels R."/>
            <person name="Smirnov S."/>
            <person name="Atnoor D."/>
            <person name="Brown A."/>
            <person name="Allen N."/>
            <person name="Naylor J."/>
            <person name="Stange-Thomann N."/>
            <person name="DeArellano K."/>
            <person name="Johnson R."/>
            <person name="Linton L."/>
            <person name="McEwan P."/>
            <person name="McKernan K."/>
            <person name="Talamas J."/>
            <person name="Tirrell A."/>
            <person name="Ye W."/>
            <person name="Zimmer A."/>
            <person name="Barber R.D."/>
            <person name="Cann I."/>
            <person name="Graham D.E."/>
            <person name="Grahame D.A."/>
            <person name="Guss A.M."/>
            <person name="Hedderich R."/>
            <person name="Ingram-Smith C."/>
            <person name="Kuettner H.C."/>
            <person name="Krzycki J.A."/>
            <person name="Leigh J.A."/>
            <person name="Li W."/>
            <person name="Liu J."/>
            <person name="Mukhopadhyay B."/>
            <person name="Reeve J.N."/>
            <person name="Smith K."/>
            <person name="Springer T.A."/>
            <person name="Umayam L.A."/>
            <person name="White O."/>
            <person name="White R.H."/>
            <person name="de Macario E.C."/>
            <person name="Ferry J.G."/>
            <person name="Jarrell K.F."/>
            <person name="Jing H."/>
            <person name="Macario A.J.L."/>
            <person name="Paulsen I.T."/>
            <person name="Pritchett M."/>
            <person name="Sowers K.R."/>
            <person name="Swanson R.V."/>
            <person name="Zinder S.H."/>
            <person name="Lander E."/>
            <person name="Metcalf W.W."/>
            <person name="Birren B."/>
        </authorList>
    </citation>
    <scope>NUCLEOTIDE SEQUENCE [LARGE SCALE GENOMIC DNA]</scope>
    <source>
        <strain>ATCC 35395 / DSM 2834 / JCM 12185 / C2A</strain>
    </source>
</reference>
<comment type="similarity">
    <text evidence="1">Belongs to the UPF0280 family.</text>
</comment>
<gene>
    <name type="ordered locus">MA_1715</name>
</gene>
<sequence length="253" mass="26762">MPEPTQKPAKEPVRAPIKEHFQLRETIVTIAADDPAHIEAAKEAIRVHRATLETYILADPYFQFTLEPYECPENAPEVVRRMVKAGNTMGIGPMSAVAGTISALAVEAMVKAGAKYAIVDNGGDIALINDRSVVVGIYAGQSPIKNLGLIFEPRDSITGVCTSAGTVGPSISFGMADAAAIFSDDVSLADAAATALGNEVGIGKEAVEVAFKVVKTVQGIKGALVIQGEYIGMWGKVPKITRAEVRHEYITKA</sequence>
<dbReference type="EMBL" id="AE010299">
    <property type="protein sequence ID" value="AAM05122.1"/>
    <property type="molecule type" value="Genomic_DNA"/>
</dbReference>
<dbReference type="RefSeq" id="WP_011021719.1">
    <property type="nucleotide sequence ID" value="NC_003552.1"/>
</dbReference>
<dbReference type="SMR" id="Q8TQ37"/>
<dbReference type="STRING" id="188937.MA_1715"/>
<dbReference type="EnsemblBacteria" id="AAM05122">
    <property type="protein sequence ID" value="AAM05122"/>
    <property type="gene ID" value="MA_1715"/>
</dbReference>
<dbReference type="GeneID" id="1473603"/>
<dbReference type="KEGG" id="mac:MA_1715"/>
<dbReference type="HOGENOM" id="CLU_074757_0_0_2"/>
<dbReference type="InParanoid" id="Q8TQ37"/>
<dbReference type="OrthoDB" id="50299at2157"/>
<dbReference type="PhylomeDB" id="Q8TQ37"/>
<dbReference type="Proteomes" id="UP000002487">
    <property type="component" value="Chromosome"/>
</dbReference>
<dbReference type="Gene3D" id="3.10.520.10">
    <property type="entry name" value="ApbE-like domains"/>
    <property type="match status" value="1"/>
</dbReference>
<dbReference type="HAMAP" id="MF_01079">
    <property type="entry name" value="UPF0280"/>
    <property type="match status" value="1"/>
</dbReference>
<dbReference type="InterPro" id="IPR003374">
    <property type="entry name" value="ApbE-like_sf"/>
</dbReference>
<dbReference type="InterPro" id="IPR037456">
    <property type="entry name" value="MA1715-like"/>
</dbReference>
<dbReference type="InterPro" id="IPR007183">
    <property type="entry name" value="UPF0280"/>
</dbReference>
<dbReference type="NCBIfam" id="NF003324">
    <property type="entry name" value="PRK04334.1-4"/>
    <property type="match status" value="1"/>
</dbReference>
<dbReference type="PIRSF" id="PIRSF006421">
    <property type="entry name" value="UCP006421"/>
    <property type="match status" value="1"/>
</dbReference>
<dbReference type="SUPFAM" id="SSF143631">
    <property type="entry name" value="ApbE-like"/>
    <property type="match status" value="1"/>
</dbReference>
<evidence type="ECO:0000255" key="1">
    <source>
        <dbReference type="HAMAP-Rule" id="MF_01079"/>
    </source>
</evidence>
<accession>Q8TQ37</accession>